<comment type="function">
    <text evidence="1">Catalyzes the formation of 6,7-dimethyl-8-ribityllumazine by condensation of 5-amino-6-(D-ribitylamino)uracil with 3,4-dihydroxy-2-butanone 4-phosphate. This is the penultimate step in the biosynthesis of riboflavin.</text>
</comment>
<comment type="catalytic activity">
    <reaction evidence="1">
        <text>(2S)-2-hydroxy-3-oxobutyl phosphate + 5-amino-6-(D-ribitylamino)uracil = 6,7-dimethyl-8-(1-D-ribityl)lumazine + phosphate + 2 H2O + H(+)</text>
        <dbReference type="Rhea" id="RHEA:26152"/>
        <dbReference type="ChEBI" id="CHEBI:15377"/>
        <dbReference type="ChEBI" id="CHEBI:15378"/>
        <dbReference type="ChEBI" id="CHEBI:15934"/>
        <dbReference type="ChEBI" id="CHEBI:43474"/>
        <dbReference type="ChEBI" id="CHEBI:58201"/>
        <dbReference type="ChEBI" id="CHEBI:58830"/>
        <dbReference type="EC" id="2.5.1.78"/>
    </reaction>
</comment>
<comment type="pathway">
    <text evidence="1">Cofactor biosynthesis; riboflavin biosynthesis; riboflavin from 2-hydroxy-3-oxobutyl phosphate and 5-amino-6-(D-ribitylamino)uracil: step 1/2.</text>
</comment>
<comment type="subunit">
    <text evidence="1">Forms an icosahedral capsid composed of 60 subunits, arranged as a dodecamer of pentamers.</text>
</comment>
<comment type="similarity">
    <text evidence="1">Belongs to the DMRL synthase family.</text>
</comment>
<reference key="1">
    <citation type="submission" date="2007-04" db="EMBL/GenBank/DDBJ databases">
        <title>Complete sequence of Pseudomonas mendocina ymp.</title>
        <authorList>
            <consortium name="US DOE Joint Genome Institute"/>
            <person name="Copeland A."/>
            <person name="Lucas S."/>
            <person name="Lapidus A."/>
            <person name="Barry K."/>
            <person name="Glavina del Rio T."/>
            <person name="Dalin E."/>
            <person name="Tice H."/>
            <person name="Pitluck S."/>
            <person name="Kiss H."/>
            <person name="Brettin T."/>
            <person name="Detter J.C."/>
            <person name="Bruce D."/>
            <person name="Han C."/>
            <person name="Schmutz J."/>
            <person name="Larimer F."/>
            <person name="Land M."/>
            <person name="Hauser L."/>
            <person name="Kyrpides N."/>
            <person name="Mikhailova N."/>
            <person name="Hersman L."/>
            <person name="Dubois J."/>
            <person name="Maurice P."/>
            <person name="Richardson P."/>
        </authorList>
    </citation>
    <scope>NUCLEOTIDE SEQUENCE [LARGE SCALE GENOMIC DNA]</scope>
    <source>
        <strain>ymp</strain>
    </source>
</reference>
<protein>
    <recommendedName>
        <fullName evidence="1">6,7-dimethyl-8-ribityllumazine synthase</fullName>
        <shortName evidence="1">DMRL synthase</shortName>
        <shortName evidence="1">LS</shortName>
        <shortName evidence="1">Lumazine synthase</shortName>
        <ecNumber evidence="1">2.5.1.78</ecNumber>
    </recommendedName>
</protein>
<keyword id="KW-0686">Riboflavin biosynthesis</keyword>
<keyword id="KW-0808">Transferase</keyword>
<accession>A4XZ35</accession>
<proteinExistence type="inferred from homology"/>
<dbReference type="EC" id="2.5.1.78" evidence="1"/>
<dbReference type="EMBL" id="CP000680">
    <property type="protein sequence ID" value="ABP86601.1"/>
    <property type="molecule type" value="Genomic_DNA"/>
</dbReference>
<dbReference type="SMR" id="A4XZ35"/>
<dbReference type="STRING" id="399739.Pmen_3854"/>
<dbReference type="KEGG" id="pmy:Pmen_3854"/>
<dbReference type="eggNOG" id="COG0054">
    <property type="taxonomic scope" value="Bacteria"/>
</dbReference>
<dbReference type="HOGENOM" id="CLU_089358_1_1_6"/>
<dbReference type="OrthoDB" id="9809709at2"/>
<dbReference type="UniPathway" id="UPA00275">
    <property type="reaction ID" value="UER00404"/>
</dbReference>
<dbReference type="GO" id="GO:0005829">
    <property type="term" value="C:cytosol"/>
    <property type="evidence" value="ECO:0007669"/>
    <property type="project" value="TreeGrafter"/>
</dbReference>
<dbReference type="GO" id="GO:0009349">
    <property type="term" value="C:riboflavin synthase complex"/>
    <property type="evidence" value="ECO:0007669"/>
    <property type="project" value="InterPro"/>
</dbReference>
<dbReference type="GO" id="GO:0000906">
    <property type="term" value="F:6,7-dimethyl-8-ribityllumazine synthase activity"/>
    <property type="evidence" value="ECO:0007669"/>
    <property type="project" value="UniProtKB-UniRule"/>
</dbReference>
<dbReference type="GO" id="GO:0009231">
    <property type="term" value="P:riboflavin biosynthetic process"/>
    <property type="evidence" value="ECO:0007669"/>
    <property type="project" value="UniProtKB-UniRule"/>
</dbReference>
<dbReference type="CDD" id="cd09209">
    <property type="entry name" value="Lumazine_synthase-I"/>
    <property type="match status" value="1"/>
</dbReference>
<dbReference type="FunFam" id="3.40.50.960:FF:000001">
    <property type="entry name" value="6,7-dimethyl-8-ribityllumazine synthase"/>
    <property type="match status" value="1"/>
</dbReference>
<dbReference type="Gene3D" id="3.40.50.960">
    <property type="entry name" value="Lumazine/riboflavin synthase"/>
    <property type="match status" value="1"/>
</dbReference>
<dbReference type="HAMAP" id="MF_00178">
    <property type="entry name" value="Lumazine_synth"/>
    <property type="match status" value="1"/>
</dbReference>
<dbReference type="InterPro" id="IPR034964">
    <property type="entry name" value="LS"/>
</dbReference>
<dbReference type="InterPro" id="IPR002180">
    <property type="entry name" value="LS/RS"/>
</dbReference>
<dbReference type="InterPro" id="IPR036467">
    <property type="entry name" value="LS/RS_sf"/>
</dbReference>
<dbReference type="NCBIfam" id="TIGR00114">
    <property type="entry name" value="lumazine-synth"/>
    <property type="match status" value="1"/>
</dbReference>
<dbReference type="NCBIfam" id="NF000812">
    <property type="entry name" value="PRK00061.1-4"/>
    <property type="match status" value="1"/>
</dbReference>
<dbReference type="PANTHER" id="PTHR21058:SF0">
    <property type="entry name" value="6,7-DIMETHYL-8-RIBITYLLUMAZINE SYNTHASE"/>
    <property type="match status" value="1"/>
</dbReference>
<dbReference type="PANTHER" id="PTHR21058">
    <property type="entry name" value="6,7-DIMETHYL-8-RIBITYLLUMAZINE SYNTHASE DMRL SYNTHASE LUMAZINE SYNTHASE"/>
    <property type="match status" value="1"/>
</dbReference>
<dbReference type="Pfam" id="PF00885">
    <property type="entry name" value="DMRL_synthase"/>
    <property type="match status" value="1"/>
</dbReference>
<dbReference type="SUPFAM" id="SSF52121">
    <property type="entry name" value="Lumazine synthase"/>
    <property type="match status" value="1"/>
</dbReference>
<name>RISB_ECTM1</name>
<gene>
    <name evidence="1" type="primary">ribH</name>
    <name type="ordered locus">Pmen_3854</name>
</gene>
<sequence>MTLKTIEGTFIAPKGKYALVVGRFNSFVVESLVSGAIDALVRHGVSESDITIIRAPGAFEIPLVTQKVAQRGEYAAIIALGAVIRGGTPHFEYVAGECTKGLAQVSMEYGVPVAFGVLTVDSIEQAIERSGTKAGNKGAEAALSALEMVSLLAQLEAK</sequence>
<evidence type="ECO:0000255" key="1">
    <source>
        <dbReference type="HAMAP-Rule" id="MF_00178"/>
    </source>
</evidence>
<organism>
    <name type="scientific">Ectopseudomonas mendocina (strain ymp)</name>
    <name type="common">Pseudomonas mendocina</name>
    <dbReference type="NCBI Taxonomy" id="399739"/>
    <lineage>
        <taxon>Bacteria</taxon>
        <taxon>Pseudomonadati</taxon>
        <taxon>Pseudomonadota</taxon>
        <taxon>Gammaproteobacteria</taxon>
        <taxon>Pseudomonadales</taxon>
        <taxon>Pseudomonadaceae</taxon>
        <taxon>Ectopseudomonas</taxon>
    </lineage>
</organism>
<feature type="chain" id="PRO_1000040490" description="6,7-dimethyl-8-ribityllumazine synthase">
    <location>
        <begin position="1"/>
        <end position="158"/>
    </location>
</feature>
<feature type="active site" description="Proton donor" evidence="1">
    <location>
        <position position="90"/>
    </location>
</feature>
<feature type="binding site" evidence="1">
    <location>
        <position position="24"/>
    </location>
    <ligand>
        <name>5-amino-6-(D-ribitylamino)uracil</name>
        <dbReference type="ChEBI" id="CHEBI:15934"/>
    </ligand>
</feature>
<feature type="binding site" evidence="1">
    <location>
        <begin position="58"/>
        <end position="60"/>
    </location>
    <ligand>
        <name>5-amino-6-(D-ribitylamino)uracil</name>
        <dbReference type="ChEBI" id="CHEBI:15934"/>
    </ligand>
</feature>
<feature type="binding site" evidence="1">
    <location>
        <begin position="82"/>
        <end position="84"/>
    </location>
    <ligand>
        <name>5-amino-6-(D-ribitylamino)uracil</name>
        <dbReference type="ChEBI" id="CHEBI:15934"/>
    </ligand>
</feature>
<feature type="binding site" evidence="1">
    <location>
        <begin position="87"/>
        <end position="88"/>
    </location>
    <ligand>
        <name>(2S)-2-hydroxy-3-oxobutyl phosphate</name>
        <dbReference type="ChEBI" id="CHEBI:58830"/>
    </ligand>
</feature>
<feature type="binding site" evidence="1">
    <location>
        <position position="115"/>
    </location>
    <ligand>
        <name>5-amino-6-(D-ribitylamino)uracil</name>
        <dbReference type="ChEBI" id="CHEBI:15934"/>
    </ligand>
</feature>
<feature type="binding site" evidence="1">
    <location>
        <position position="129"/>
    </location>
    <ligand>
        <name>(2S)-2-hydroxy-3-oxobutyl phosphate</name>
        <dbReference type="ChEBI" id="CHEBI:58830"/>
    </ligand>
</feature>